<name>Y1460_CROS8</name>
<organism>
    <name type="scientific">Cronobacter sakazakii (strain ATCC BAA-894)</name>
    <name type="common">Enterobacter sakazakii</name>
    <dbReference type="NCBI Taxonomy" id="290339"/>
    <lineage>
        <taxon>Bacteria</taxon>
        <taxon>Pseudomonadati</taxon>
        <taxon>Pseudomonadota</taxon>
        <taxon>Gammaproteobacteria</taxon>
        <taxon>Enterobacterales</taxon>
        <taxon>Enterobacteriaceae</taxon>
        <taxon>Cronobacter</taxon>
    </lineage>
</organism>
<sequence length="91" mass="10570">MFCVIYRSARREQTYLYVEKKDDFSRVPEELLAGFGQPIMTMMLPLDGRKKLANADLEKVKQALKDQGYYLQLPPPPENLLKQHLESIGKK</sequence>
<reference key="1">
    <citation type="journal article" date="2010" name="PLoS ONE">
        <title>Genome sequence of Cronobacter sakazakii BAA-894 and comparative genomic hybridization analysis with other Cronobacter species.</title>
        <authorList>
            <person name="Kucerova E."/>
            <person name="Clifton S.W."/>
            <person name="Xia X.Q."/>
            <person name="Long F."/>
            <person name="Porwollik S."/>
            <person name="Fulton L."/>
            <person name="Fronick C."/>
            <person name="Minx P."/>
            <person name="Kyung K."/>
            <person name="Warren W."/>
            <person name="Fulton R."/>
            <person name="Feng D."/>
            <person name="Wollam A."/>
            <person name="Shah N."/>
            <person name="Bhonagiri V."/>
            <person name="Nash W.E."/>
            <person name="Hallsworth-Pepin K."/>
            <person name="Wilson R.K."/>
            <person name="McClelland M."/>
            <person name="Forsythe S.J."/>
        </authorList>
    </citation>
    <scope>NUCLEOTIDE SEQUENCE [LARGE SCALE GENOMIC DNA]</scope>
    <source>
        <strain>ATCC BAA-894</strain>
    </source>
</reference>
<protein>
    <recommendedName>
        <fullName evidence="1">YcgL domain-containing protein ESA_01460</fullName>
    </recommendedName>
</protein>
<gene>
    <name type="ordered locus">ESA_01460</name>
</gene>
<proteinExistence type="inferred from homology"/>
<accession>A7MNK1</accession>
<feature type="chain" id="PRO_0000375285" description="YcgL domain-containing protein ESA_01460">
    <location>
        <begin position="1"/>
        <end position="91"/>
    </location>
</feature>
<feature type="domain" description="YcgL" evidence="1">
    <location>
        <begin position="1"/>
        <end position="85"/>
    </location>
</feature>
<keyword id="KW-1185">Reference proteome</keyword>
<evidence type="ECO:0000255" key="1">
    <source>
        <dbReference type="HAMAP-Rule" id="MF_01866"/>
    </source>
</evidence>
<dbReference type="EMBL" id="CP000783">
    <property type="protein sequence ID" value="ABU76718.1"/>
    <property type="molecule type" value="Genomic_DNA"/>
</dbReference>
<dbReference type="RefSeq" id="WP_004384981.1">
    <property type="nucleotide sequence ID" value="NC_009778.1"/>
</dbReference>
<dbReference type="SMR" id="A7MNK1"/>
<dbReference type="KEGG" id="esa:ESA_01460"/>
<dbReference type="HOGENOM" id="CLU_155118_1_0_6"/>
<dbReference type="Proteomes" id="UP000000260">
    <property type="component" value="Chromosome"/>
</dbReference>
<dbReference type="Gene3D" id="3.10.510.20">
    <property type="entry name" value="YcgL domain"/>
    <property type="match status" value="1"/>
</dbReference>
<dbReference type="HAMAP" id="MF_01866">
    <property type="entry name" value="UPF0745"/>
    <property type="match status" value="1"/>
</dbReference>
<dbReference type="InterPro" id="IPR038068">
    <property type="entry name" value="YcgL-like_sf"/>
</dbReference>
<dbReference type="InterPro" id="IPR027354">
    <property type="entry name" value="YcgL_dom"/>
</dbReference>
<dbReference type="PANTHER" id="PTHR38109">
    <property type="entry name" value="PROTEIN YCGL"/>
    <property type="match status" value="1"/>
</dbReference>
<dbReference type="PANTHER" id="PTHR38109:SF1">
    <property type="entry name" value="PROTEIN YCGL"/>
    <property type="match status" value="1"/>
</dbReference>
<dbReference type="Pfam" id="PF05166">
    <property type="entry name" value="YcgL"/>
    <property type="match status" value="1"/>
</dbReference>
<dbReference type="SUPFAM" id="SSF160191">
    <property type="entry name" value="YcgL-like"/>
    <property type="match status" value="1"/>
</dbReference>
<dbReference type="PROSITE" id="PS51648">
    <property type="entry name" value="YCGL"/>
    <property type="match status" value="1"/>
</dbReference>